<sequence>MTAPSQVLKIRRPDDWHVHLRDGDMLKTVVPYTSEIYGRAIVMPNLASPITTVDAAIAYRQRILDAVPAGHDFTPLMTCYLTDSLDADELERGFHEGVFTAAKLYPANATTNSSHGVTSVDAIMPVLERMEKLGMPLLVHGEVTHADVDIFDREARFIDTVMEPLRQRLTALKVVFEHITTKDAAQYVRDGSYNLAATITPQHLMFNRNDMLVGGIRPHLYCLPILKRNIHQQALRDLVASGFTRAFLGTDSAPHSRHRKETRCGCAGCFNAPSALGSYAAVFEEMNALAHFEAFCSLNGPQFYGLPVNTGWVELVRDEQQIPENIALADDSLVPFLAGETVRWSVKK</sequence>
<keyword id="KW-0378">Hydrolase</keyword>
<keyword id="KW-0479">Metal-binding</keyword>
<keyword id="KW-0665">Pyrimidine biosynthesis</keyword>
<keyword id="KW-0862">Zinc</keyword>
<proteinExistence type="inferred from homology"/>
<gene>
    <name evidence="2" type="primary">pyrC</name>
    <name type="ordered locus">STY1201</name>
    <name type="ordered locus">t1757</name>
</gene>
<accession>Q8Z7L2</accession>
<evidence type="ECO:0000250" key="1"/>
<evidence type="ECO:0000255" key="2">
    <source>
        <dbReference type="HAMAP-Rule" id="MF_00219"/>
    </source>
</evidence>
<comment type="function">
    <text evidence="2">Catalyzes the reversible cyclization of carbamoyl aspartate to dihydroorotate.</text>
</comment>
<comment type="catalytic activity">
    <reaction evidence="2">
        <text>(S)-dihydroorotate + H2O = N-carbamoyl-L-aspartate + H(+)</text>
        <dbReference type="Rhea" id="RHEA:24296"/>
        <dbReference type="ChEBI" id="CHEBI:15377"/>
        <dbReference type="ChEBI" id="CHEBI:15378"/>
        <dbReference type="ChEBI" id="CHEBI:30864"/>
        <dbReference type="ChEBI" id="CHEBI:32814"/>
        <dbReference type="EC" id="3.5.2.3"/>
    </reaction>
</comment>
<comment type="cofactor">
    <cofactor evidence="2">
        <name>Zn(2+)</name>
        <dbReference type="ChEBI" id="CHEBI:29105"/>
    </cofactor>
    <text evidence="2">Binds 2 Zn(2+) ions per subunit.</text>
</comment>
<comment type="pathway">
    <text evidence="2">Pyrimidine metabolism; UMP biosynthesis via de novo pathway; (S)-dihydroorotate from bicarbonate: step 3/3.</text>
</comment>
<comment type="subunit">
    <text evidence="2">Homodimer.</text>
</comment>
<comment type="similarity">
    <text evidence="2">Belongs to the metallo-dependent hydrolases superfamily. DHOase family. Class II DHOase subfamily.</text>
</comment>
<protein>
    <recommendedName>
        <fullName evidence="2">Dihydroorotase</fullName>
        <shortName evidence="2">DHOase</shortName>
        <ecNumber evidence="2">3.5.2.3</ecNumber>
    </recommendedName>
</protein>
<reference key="1">
    <citation type="journal article" date="2001" name="Nature">
        <title>Complete genome sequence of a multiple drug resistant Salmonella enterica serovar Typhi CT18.</title>
        <authorList>
            <person name="Parkhill J."/>
            <person name="Dougan G."/>
            <person name="James K.D."/>
            <person name="Thomson N.R."/>
            <person name="Pickard D."/>
            <person name="Wain J."/>
            <person name="Churcher C.M."/>
            <person name="Mungall K.L."/>
            <person name="Bentley S.D."/>
            <person name="Holden M.T.G."/>
            <person name="Sebaihia M."/>
            <person name="Baker S."/>
            <person name="Basham D."/>
            <person name="Brooks K."/>
            <person name="Chillingworth T."/>
            <person name="Connerton P."/>
            <person name="Cronin A."/>
            <person name="Davis P."/>
            <person name="Davies R.M."/>
            <person name="Dowd L."/>
            <person name="White N."/>
            <person name="Farrar J."/>
            <person name="Feltwell T."/>
            <person name="Hamlin N."/>
            <person name="Haque A."/>
            <person name="Hien T.T."/>
            <person name="Holroyd S."/>
            <person name="Jagels K."/>
            <person name="Krogh A."/>
            <person name="Larsen T.S."/>
            <person name="Leather S."/>
            <person name="Moule S."/>
            <person name="O'Gaora P."/>
            <person name="Parry C."/>
            <person name="Quail M.A."/>
            <person name="Rutherford K.M."/>
            <person name="Simmonds M."/>
            <person name="Skelton J."/>
            <person name="Stevens K."/>
            <person name="Whitehead S."/>
            <person name="Barrell B.G."/>
        </authorList>
    </citation>
    <scope>NUCLEOTIDE SEQUENCE [LARGE SCALE GENOMIC DNA]</scope>
    <source>
        <strain>CT18</strain>
    </source>
</reference>
<reference key="2">
    <citation type="journal article" date="2003" name="J. Bacteriol.">
        <title>Comparative genomics of Salmonella enterica serovar Typhi strains Ty2 and CT18.</title>
        <authorList>
            <person name="Deng W."/>
            <person name="Liou S.-R."/>
            <person name="Plunkett G. III"/>
            <person name="Mayhew G.F."/>
            <person name="Rose D.J."/>
            <person name="Burland V."/>
            <person name="Kodoyianni V."/>
            <person name="Schwartz D.C."/>
            <person name="Blattner F.R."/>
        </authorList>
    </citation>
    <scope>NUCLEOTIDE SEQUENCE [LARGE SCALE GENOMIC DNA]</scope>
    <source>
        <strain>ATCC 700931 / Ty2</strain>
    </source>
</reference>
<organism>
    <name type="scientific">Salmonella typhi</name>
    <dbReference type="NCBI Taxonomy" id="90370"/>
    <lineage>
        <taxon>Bacteria</taxon>
        <taxon>Pseudomonadati</taxon>
        <taxon>Pseudomonadota</taxon>
        <taxon>Gammaproteobacteria</taxon>
        <taxon>Enterobacterales</taxon>
        <taxon>Enterobacteriaceae</taxon>
        <taxon>Salmonella</taxon>
    </lineage>
</organism>
<name>PYRC_SALTI</name>
<feature type="initiator methionine" description="Removed" evidence="1">
    <location>
        <position position="1"/>
    </location>
</feature>
<feature type="chain" id="PRO_0000147217" description="Dihydroorotase">
    <location>
        <begin position="2"/>
        <end position="348"/>
    </location>
</feature>
<feature type="active site" evidence="2">
    <location>
        <position position="251"/>
    </location>
</feature>
<feature type="binding site" evidence="2">
    <location>
        <position position="17"/>
    </location>
    <ligand>
        <name>Zn(2+)</name>
        <dbReference type="ChEBI" id="CHEBI:29105"/>
        <label>1</label>
    </ligand>
</feature>
<feature type="binding site" evidence="2">
    <location>
        <begin position="19"/>
        <end position="21"/>
    </location>
    <ligand>
        <name>substrate</name>
    </ligand>
</feature>
<feature type="binding site" evidence="2">
    <location>
        <position position="19"/>
    </location>
    <ligand>
        <name>Zn(2+)</name>
        <dbReference type="ChEBI" id="CHEBI:29105"/>
        <label>1</label>
    </ligand>
</feature>
<feature type="binding site" evidence="2">
    <location>
        <position position="45"/>
    </location>
    <ligand>
        <name>substrate</name>
    </ligand>
</feature>
<feature type="binding site" description="via carbamate group" evidence="2">
    <location>
        <position position="103"/>
    </location>
    <ligand>
        <name>Zn(2+)</name>
        <dbReference type="ChEBI" id="CHEBI:29105"/>
        <label>1</label>
    </ligand>
</feature>
<feature type="binding site" description="via carbamate group" evidence="2">
    <location>
        <position position="103"/>
    </location>
    <ligand>
        <name>Zn(2+)</name>
        <dbReference type="ChEBI" id="CHEBI:29105"/>
        <label>2</label>
    </ligand>
</feature>
<feature type="binding site" evidence="2">
    <location>
        <position position="140"/>
    </location>
    <ligand>
        <name>substrate</name>
    </ligand>
</feature>
<feature type="binding site" evidence="2">
    <location>
        <position position="140"/>
    </location>
    <ligand>
        <name>Zn(2+)</name>
        <dbReference type="ChEBI" id="CHEBI:29105"/>
        <label>2</label>
    </ligand>
</feature>
<feature type="binding site" evidence="2">
    <location>
        <position position="178"/>
    </location>
    <ligand>
        <name>Zn(2+)</name>
        <dbReference type="ChEBI" id="CHEBI:29105"/>
        <label>2</label>
    </ligand>
</feature>
<feature type="binding site" evidence="2">
    <location>
        <position position="223"/>
    </location>
    <ligand>
        <name>substrate</name>
    </ligand>
</feature>
<feature type="binding site" evidence="2">
    <location>
        <position position="251"/>
    </location>
    <ligand>
        <name>Zn(2+)</name>
        <dbReference type="ChEBI" id="CHEBI:29105"/>
        <label>1</label>
    </ligand>
</feature>
<feature type="binding site" evidence="2">
    <location>
        <position position="255"/>
    </location>
    <ligand>
        <name>substrate</name>
    </ligand>
</feature>
<feature type="binding site" evidence="2">
    <location>
        <position position="267"/>
    </location>
    <ligand>
        <name>substrate</name>
    </ligand>
</feature>
<feature type="modified residue" description="N6-carboxylysine" evidence="2">
    <location>
        <position position="103"/>
    </location>
</feature>
<dbReference type="EC" id="3.5.2.3" evidence="2"/>
<dbReference type="EMBL" id="AL513382">
    <property type="protein sequence ID" value="CAD08287.1"/>
    <property type="molecule type" value="Genomic_DNA"/>
</dbReference>
<dbReference type="EMBL" id="AE014613">
    <property type="protein sequence ID" value="AAO69381.1"/>
    <property type="molecule type" value="Genomic_DNA"/>
</dbReference>
<dbReference type="RefSeq" id="NP_455656.1">
    <property type="nucleotide sequence ID" value="NC_003198.1"/>
</dbReference>
<dbReference type="RefSeq" id="WP_000126592.1">
    <property type="nucleotide sequence ID" value="NZ_WSUR01000018.1"/>
</dbReference>
<dbReference type="SMR" id="Q8Z7L2"/>
<dbReference type="STRING" id="220341.gene:17585167"/>
<dbReference type="KEGG" id="stt:t1757"/>
<dbReference type="KEGG" id="sty:STY1201"/>
<dbReference type="PATRIC" id="fig|220341.7.peg.1203"/>
<dbReference type="eggNOG" id="COG0418">
    <property type="taxonomic scope" value="Bacteria"/>
</dbReference>
<dbReference type="HOGENOM" id="CLU_041558_1_0_6"/>
<dbReference type="OMA" id="TLHHISM"/>
<dbReference type="OrthoDB" id="9808095at2"/>
<dbReference type="UniPathway" id="UPA00070">
    <property type="reaction ID" value="UER00117"/>
</dbReference>
<dbReference type="Proteomes" id="UP000000541">
    <property type="component" value="Chromosome"/>
</dbReference>
<dbReference type="Proteomes" id="UP000002670">
    <property type="component" value="Chromosome"/>
</dbReference>
<dbReference type="GO" id="GO:0005829">
    <property type="term" value="C:cytosol"/>
    <property type="evidence" value="ECO:0007669"/>
    <property type="project" value="TreeGrafter"/>
</dbReference>
<dbReference type="GO" id="GO:0004151">
    <property type="term" value="F:dihydroorotase activity"/>
    <property type="evidence" value="ECO:0007669"/>
    <property type="project" value="UniProtKB-UniRule"/>
</dbReference>
<dbReference type="GO" id="GO:0008270">
    <property type="term" value="F:zinc ion binding"/>
    <property type="evidence" value="ECO:0007669"/>
    <property type="project" value="UniProtKB-UniRule"/>
</dbReference>
<dbReference type="GO" id="GO:0006207">
    <property type="term" value="P:'de novo' pyrimidine nucleobase biosynthetic process"/>
    <property type="evidence" value="ECO:0007669"/>
    <property type="project" value="TreeGrafter"/>
</dbReference>
<dbReference type="GO" id="GO:0044205">
    <property type="term" value="P:'de novo' UMP biosynthetic process"/>
    <property type="evidence" value="ECO:0007669"/>
    <property type="project" value="UniProtKB-UniRule"/>
</dbReference>
<dbReference type="CDD" id="cd01294">
    <property type="entry name" value="DHOase"/>
    <property type="match status" value="1"/>
</dbReference>
<dbReference type="FunFam" id="3.20.20.140:FF:000006">
    <property type="entry name" value="Dihydroorotase"/>
    <property type="match status" value="1"/>
</dbReference>
<dbReference type="Gene3D" id="3.20.20.140">
    <property type="entry name" value="Metal-dependent hydrolases"/>
    <property type="match status" value="1"/>
</dbReference>
<dbReference type="HAMAP" id="MF_00219">
    <property type="entry name" value="PyrC_classII"/>
    <property type="match status" value="1"/>
</dbReference>
<dbReference type="InterPro" id="IPR006680">
    <property type="entry name" value="Amidohydro-rel"/>
</dbReference>
<dbReference type="InterPro" id="IPR004721">
    <property type="entry name" value="DHOdimr"/>
</dbReference>
<dbReference type="InterPro" id="IPR002195">
    <property type="entry name" value="Dihydroorotase_CS"/>
</dbReference>
<dbReference type="InterPro" id="IPR032466">
    <property type="entry name" value="Metal_Hydrolase"/>
</dbReference>
<dbReference type="NCBIfam" id="TIGR00856">
    <property type="entry name" value="pyrC_dimer"/>
    <property type="match status" value="1"/>
</dbReference>
<dbReference type="PANTHER" id="PTHR43137">
    <property type="entry name" value="DIHYDROOROTASE"/>
    <property type="match status" value="1"/>
</dbReference>
<dbReference type="PANTHER" id="PTHR43137:SF1">
    <property type="entry name" value="DIHYDROOROTASE"/>
    <property type="match status" value="1"/>
</dbReference>
<dbReference type="Pfam" id="PF01979">
    <property type="entry name" value="Amidohydro_1"/>
    <property type="match status" value="1"/>
</dbReference>
<dbReference type="PIRSF" id="PIRSF001237">
    <property type="entry name" value="DHOdimr"/>
    <property type="match status" value="1"/>
</dbReference>
<dbReference type="SUPFAM" id="SSF51556">
    <property type="entry name" value="Metallo-dependent hydrolases"/>
    <property type="match status" value="1"/>
</dbReference>
<dbReference type="PROSITE" id="PS00482">
    <property type="entry name" value="DIHYDROOROTASE_1"/>
    <property type="match status" value="1"/>
</dbReference>
<dbReference type="PROSITE" id="PS00483">
    <property type="entry name" value="DIHYDROOROTASE_2"/>
    <property type="match status" value="1"/>
</dbReference>